<sequence length="330" mass="36691">MKTAYIAKQRQISFVKSHFSRQLEERLGLIEVQAPILSRVGDGTQDNLSGCEKAVQVKVKALPDAQFEVVHSLAKWKRQTLGQHDFSAGEGLYTHMKALRPDEERLSPLHSVYVDQWDWERVMGDGERQFSTLKSTVEAIWAGIKATEAAVSEEFGLAPFLPDQIHFVHSQELLSRYPDLDAKGRERAIAKDLGAVFLVGIGGKLSDGHRHDVRAPDYDDWSTPSELGHAGLNGDILVWNPVLEDAFELSSMGIRVDADTLKHQLALTGDEDRLQLEWHQALLRGEMPQTIGGGIGQSRLTMLLLQLPHIGQVQCGVWPAAVRENVPSLL</sequence>
<comment type="catalytic activity">
    <reaction evidence="1">
        <text>L-aspartate + NH4(+) + ATP = L-asparagine + AMP + diphosphate + H(+)</text>
        <dbReference type="Rhea" id="RHEA:11372"/>
        <dbReference type="ChEBI" id="CHEBI:15378"/>
        <dbReference type="ChEBI" id="CHEBI:28938"/>
        <dbReference type="ChEBI" id="CHEBI:29991"/>
        <dbReference type="ChEBI" id="CHEBI:30616"/>
        <dbReference type="ChEBI" id="CHEBI:33019"/>
        <dbReference type="ChEBI" id="CHEBI:58048"/>
        <dbReference type="ChEBI" id="CHEBI:456215"/>
        <dbReference type="EC" id="6.3.1.1"/>
    </reaction>
</comment>
<comment type="pathway">
    <text evidence="1">Amino-acid biosynthesis; L-asparagine biosynthesis; L-asparagine from L-aspartate (ammonia route): step 1/1.</text>
</comment>
<comment type="subcellular location">
    <subcellularLocation>
        <location evidence="1">Cytoplasm</location>
    </subcellularLocation>
</comment>
<comment type="similarity">
    <text evidence="1">Belongs to the class-II aminoacyl-tRNA synthetase family. AsnA subfamily.</text>
</comment>
<dbReference type="EC" id="6.3.1.1" evidence="1"/>
<dbReference type="EMBL" id="CU928145">
    <property type="protein sequence ID" value="CAV00838.1"/>
    <property type="molecule type" value="Genomic_DNA"/>
</dbReference>
<dbReference type="RefSeq" id="WP_000845133.1">
    <property type="nucleotide sequence ID" value="NC_011748.1"/>
</dbReference>
<dbReference type="SMR" id="B7L891"/>
<dbReference type="GeneID" id="75205462"/>
<dbReference type="KEGG" id="eck:EC55989_4219"/>
<dbReference type="HOGENOM" id="CLU_071543_0_0_6"/>
<dbReference type="UniPathway" id="UPA00134">
    <property type="reaction ID" value="UER00194"/>
</dbReference>
<dbReference type="Proteomes" id="UP000000746">
    <property type="component" value="Chromosome"/>
</dbReference>
<dbReference type="GO" id="GO:0005829">
    <property type="term" value="C:cytosol"/>
    <property type="evidence" value="ECO:0007669"/>
    <property type="project" value="TreeGrafter"/>
</dbReference>
<dbReference type="GO" id="GO:0004071">
    <property type="term" value="F:aspartate-ammonia ligase activity"/>
    <property type="evidence" value="ECO:0007669"/>
    <property type="project" value="UniProtKB-UniRule"/>
</dbReference>
<dbReference type="GO" id="GO:0005524">
    <property type="term" value="F:ATP binding"/>
    <property type="evidence" value="ECO:0007669"/>
    <property type="project" value="UniProtKB-UniRule"/>
</dbReference>
<dbReference type="GO" id="GO:0070981">
    <property type="term" value="P:L-asparagine biosynthetic process"/>
    <property type="evidence" value="ECO:0007669"/>
    <property type="project" value="UniProtKB-UniRule"/>
</dbReference>
<dbReference type="CDD" id="cd00645">
    <property type="entry name" value="AsnA"/>
    <property type="match status" value="1"/>
</dbReference>
<dbReference type="FunFam" id="3.30.930.10:FF:000025">
    <property type="entry name" value="Aspartate--ammonia ligase"/>
    <property type="match status" value="1"/>
</dbReference>
<dbReference type="Gene3D" id="3.30.930.10">
    <property type="entry name" value="Bira Bifunctional Protein, Domain 2"/>
    <property type="match status" value="1"/>
</dbReference>
<dbReference type="HAMAP" id="MF_00555">
    <property type="entry name" value="AsnA"/>
    <property type="match status" value="1"/>
</dbReference>
<dbReference type="InterPro" id="IPR006195">
    <property type="entry name" value="aa-tRNA-synth_II"/>
</dbReference>
<dbReference type="InterPro" id="IPR045864">
    <property type="entry name" value="aa-tRNA-synth_II/BPL/LPL"/>
</dbReference>
<dbReference type="InterPro" id="IPR004618">
    <property type="entry name" value="AsnA"/>
</dbReference>
<dbReference type="NCBIfam" id="TIGR00669">
    <property type="entry name" value="asnA"/>
    <property type="match status" value="1"/>
</dbReference>
<dbReference type="PANTHER" id="PTHR30073">
    <property type="entry name" value="ASPARTATE--AMMONIA LIGASE"/>
    <property type="match status" value="1"/>
</dbReference>
<dbReference type="PANTHER" id="PTHR30073:SF5">
    <property type="entry name" value="ASPARTATE--AMMONIA LIGASE"/>
    <property type="match status" value="1"/>
</dbReference>
<dbReference type="Pfam" id="PF03590">
    <property type="entry name" value="AsnA"/>
    <property type="match status" value="1"/>
</dbReference>
<dbReference type="PIRSF" id="PIRSF001555">
    <property type="entry name" value="Asp_ammon_ligase"/>
    <property type="match status" value="1"/>
</dbReference>
<dbReference type="SUPFAM" id="SSF55681">
    <property type="entry name" value="Class II aaRS and biotin synthetases"/>
    <property type="match status" value="1"/>
</dbReference>
<dbReference type="PROSITE" id="PS50862">
    <property type="entry name" value="AA_TRNA_LIGASE_II"/>
    <property type="match status" value="1"/>
</dbReference>
<keyword id="KW-0028">Amino-acid biosynthesis</keyword>
<keyword id="KW-0061">Asparagine biosynthesis</keyword>
<keyword id="KW-0067">ATP-binding</keyword>
<keyword id="KW-0963">Cytoplasm</keyword>
<keyword id="KW-0436">Ligase</keyword>
<keyword id="KW-0547">Nucleotide-binding</keyword>
<keyword id="KW-1185">Reference proteome</keyword>
<feature type="chain" id="PRO_1000146693" description="Aspartate--ammonia ligase">
    <location>
        <begin position="1"/>
        <end position="330"/>
    </location>
</feature>
<gene>
    <name evidence="1" type="primary">asnA</name>
    <name type="ordered locus">EC55989_4219</name>
</gene>
<accession>B7L891</accession>
<name>ASNA_ECO55</name>
<organism>
    <name type="scientific">Escherichia coli (strain 55989 / EAEC)</name>
    <dbReference type="NCBI Taxonomy" id="585055"/>
    <lineage>
        <taxon>Bacteria</taxon>
        <taxon>Pseudomonadati</taxon>
        <taxon>Pseudomonadota</taxon>
        <taxon>Gammaproteobacteria</taxon>
        <taxon>Enterobacterales</taxon>
        <taxon>Enterobacteriaceae</taxon>
        <taxon>Escherichia</taxon>
    </lineage>
</organism>
<proteinExistence type="inferred from homology"/>
<protein>
    <recommendedName>
        <fullName evidence="1">Aspartate--ammonia ligase</fullName>
        <ecNumber evidence="1">6.3.1.1</ecNumber>
    </recommendedName>
    <alternativeName>
        <fullName evidence="1">Asparagine synthetase A</fullName>
    </alternativeName>
</protein>
<reference key="1">
    <citation type="journal article" date="2009" name="PLoS Genet.">
        <title>Organised genome dynamics in the Escherichia coli species results in highly diverse adaptive paths.</title>
        <authorList>
            <person name="Touchon M."/>
            <person name="Hoede C."/>
            <person name="Tenaillon O."/>
            <person name="Barbe V."/>
            <person name="Baeriswyl S."/>
            <person name="Bidet P."/>
            <person name="Bingen E."/>
            <person name="Bonacorsi S."/>
            <person name="Bouchier C."/>
            <person name="Bouvet O."/>
            <person name="Calteau A."/>
            <person name="Chiapello H."/>
            <person name="Clermont O."/>
            <person name="Cruveiller S."/>
            <person name="Danchin A."/>
            <person name="Diard M."/>
            <person name="Dossat C."/>
            <person name="Karoui M.E."/>
            <person name="Frapy E."/>
            <person name="Garry L."/>
            <person name="Ghigo J.M."/>
            <person name="Gilles A.M."/>
            <person name="Johnson J."/>
            <person name="Le Bouguenec C."/>
            <person name="Lescat M."/>
            <person name="Mangenot S."/>
            <person name="Martinez-Jehanne V."/>
            <person name="Matic I."/>
            <person name="Nassif X."/>
            <person name="Oztas S."/>
            <person name="Petit M.A."/>
            <person name="Pichon C."/>
            <person name="Rouy Z."/>
            <person name="Ruf C.S."/>
            <person name="Schneider D."/>
            <person name="Tourret J."/>
            <person name="Vacherie B."/>
            <person name="Vallenet D."/>
            <person name="Medigue C."/>
            <person name="Rocha E.P.C."/>
            <person name="Denamur E."/>
        </authorList>
    </citation>
    <scope>NUCLEOTIDE SEQUENCE [LARGE SCALE GENOMIC DNA]</scope>
    <source>
        <strain>55989 / EAEC</strain>
    </source>
</reference>
<evidence type="ECO:0000255" key="1">
    <source>
        <dbReference type="HAMAP-Rule" id="MF_00555"/>
    </source>
</evidence>